<protein>
    <recommendedName>
        <fullName evidence="12">Dedicator of cytokinesis protein 9</fullName>
    </recommendedName>
    <alternativeName>
        <fullName evidence="12">Cdc42 guanine nucleotide exchange factor zizimin-1</fullName>
        <shortName evidence="12">Zizimin-1</shortName>
    </alternativeName>
</protein>
<dbReference type="EMBL" id="AF527605">
    <property type="protein sequence ID" value="AAM90306.1"/>
    <property type="molecule type" value="mRNA"/>
</dbReference>
<dbReference type="EMBL" id="AB028981">
    <property type="protein sequence ID" value="BAA83010.2"/>
    <property type="status" value="ALT_INIT"/>
    <property type="molecule type" value="mRNA"/>
</dbReference>
<dbReference type="EMBL" id="AK126492">
    <property type="protein sequence ID" value="BAG54337.1"/>
    <property type="molecule type" value="mRNA"/>
</dbReference>
<dbReference type="EMBL" id="AL139084">
    <property type="status" value="NOT_ANNOTATED_CDS"/>
    <property type="molecule type" value="Genomic_DNA"/>
</dbReference>
<dbReference type="EMBL" id="AL161420">
    <property type="status" value="NOT_ANNOTATED_CDS"/>
    <property type="molecule type" value="Genomic_DNA"/>
</dbReference>
<dbReference type="EMBL" id="AL391122">
    <property type="status" value="NOT_ANNOTATED_CDS"/>
    <property type="molecule type" value="Genomic_DNA"/>
</dbReference>
<dbReference type="EMBL" id="BC043506">
    <property type="protein sequence ID" value="AAH43506.1"/>
    <property type="molecule type" value="mRNA"/>
</dbReference>
<dbReference type="CCDS" id="CCDS45062.1">
    <molecule id="Q9BZ29-5"/>
</dbReference>
<dbReference type="CCDS" id="CCDS45063.1">
    <molecule id="Q9BZ29-6"/>
</dbReference>
<dbReference type="CCDS" id="CCDS91829.1">
    <molecule id="Q9BZ29-1"/>
</dbReference>
<dbReference type="RefSeq" id="NP_001123520.1">
    <molecule id="Q9BZ29-5"/>
    <property type="nucleotide sequence ID" value="NM_001130048.2"/>
</dbReference>
<dbReference type="RefSeq" id="NP_001123521.1">
    <property type="nucleotide sequence ID" value="NM_001130049.1"/>
</dbReference>
<dbReference type="RefSeq" id="NP_001123522.1">
    <molecule id="Q9BZ29-6"/>
    <property type="nucleotide sequence ID" value="NM_001130050.2"/>
</dbReference>
<dbReference type="RefSeq" id="NP_001305778.1">
    <property type="nucleotide sequence ID" value="NM_001318849.1"/>
</dbReference>
<dbReference type="RefSeq" id="NP_056111.1">
    <molecule id="Q9BZ29-1"/>
    <property type="nucleotide sequence ID" value="NM_015296.3"/>
</dbReference>
<dbReference type="RefSeq" id="XP_047286191.1">
    <molecule id="Q9BZ29-4"/>
    <property type="nucleotide sequence ID" value="XM_047430235.1"/>
</dbReference>
<dbReference type="PDB" id="1WG7">
    <property type="method" value="NMR"/>
    <property type="chains" value="A=165-301"/>
</dbReference>
<dbReference type="PDB" id="2WM9">
    <property type="method" value="X-ray"/>
    <property type="resolution" value="2.20 A"/>
    <property type="chains" value="A=1605-2067"/>
</dbReference>
<dbReference type="PDB" id="2WMN">
    <property type="method" value="X-ray"/>
    <property type="resolution" value="2.39 A"/>
    <property type="chains" value="A=1605-2067"/>
</dbReference>
<dbReference type="PDB" id="2WMO">
    <property type="method" value="X-ray"/>
    <property type="resolution" value="2.20 A"/>
    <property type="chains" value="A=1605-2067"/>
</dbReference>
<dbReference type="PDBsum" id="1WG7"/>
<dbReference type="PDBsum" id="2WM9"/>
<dbReference type="PDBsum" id="2WMN"/>
<dbReference type="PDBsum" id="2WMO"/>
<dbReference type="SMR" id="Q9BZ29"/>
<dbReference type="BioGRID" id="116930">
    <property type="interactions" value="62"/>
</dbReference>
<dbReference type="FunCoup" id="Q9BZ29">
    <property type="interactions" value="1472"/>
</dbReference>
<dbReference type="IntAct" id="Q9BZ29">
    <property type="interactions" value="36"/>
</dbReference>
<dbReference type="MINT" id="Q9BZ29"/>
<dbReference type="STRING" id="9606.ENSP00000365643"/>
<dbReference type="GlyGen" id="Q9BZ29">
    <property type="glycosylation" value="1 site, 1 O-linked glycan (1 site)"/>
</dbReference>
<dbReference type="iPTMnet" id="Q9BZ29"/>
<dbReference type="PhosphoSitePlus" id="Q9BZ29"/>
<dbReference type="BioMuta" id="DOCK9"/>
<dbReference type="DMDM" id="24212635"/>
<dbReference type="jPOST" id="Q9BZ29"/>
<dbReference type="MassIVE" id="Q9BZ29"/>
<dbReference type="PaxDb" id="9606-ENSP00000365643"/>
<dbReference type="PeptideAtlas" id="Q9BZ29"/>
<dbReference type="ProteomicsDB" id="20137"/>
<dbReference type="ProteomicsDB" id="79758">
    <molecule id="Q9BZ29-1"/>
</dbReference>
<dbReference type="ProteomicsDB" id="79759">
    <molecule id="Q9BZ29-3"/>
</dbReference>
<dbReference type="ProteomicsDB" id="79760">
    <molecule id="Q9BZ29-4"/>
</dbReference>
<dbReference type="ProteomicsDB" id="79761">
    <molecule id="Q9BZ29-5"/>
</dbReference>
<dbReference type="Pumba" id="Q9BZ29"/>
<dbReference type="Antibodypedia" id="25029">
    <property type="antibodies" value="57 antibodies from 18 providers"/>
</dbReference>
<dbReference type="DNASU" id="23348"/>
<dbReference type="Ensembl" id="ENST00000376460.5">
    <molecule id="Q9BZ29-5"/>
    <property type="protein sequence ID" value="ENSP00000365643.1"/>
    <property type="gene ID" value="ENSG00000088387.22"/>
</dbReference>
<dbReference type="Ensembl" id="ENST00000627024.2">
    <molecule id="Q9BZ29-6"/>
    <property type="protein sequence ID" value="ENSP00000487551.1"/>
    <property type="gene ID" value="ENSG00000088387.22"/>
</dbReference>
<dbReference type="Ensembl" id="ENST00000652315.1">
    <molecule id="Q9BZ29-1"/>
    <property type="protein sequence ID" value="ENSP00000498761.1"/>
    <property type="gene ID" value="ENSG00000088387.22"/>
</dbReference>
<dbReference type="GeneID" id="23348"/>
<dbReference type="KEGG" id="hsa:23348"/>
<dbReference type="UCSC" id="uc058xyj.1">
    <molecule id="Q9BZ29-1"/>
    <property type="organism name" value="human"/>
</dbReference>
<dbReference type="AGR" id="HGNC:14132"/>
<dbReference type="CTD" id="23348"/>
<dbReference type="DisGeNET" id="23348"/>
<dbReference type="GeneCards" id="DOCK9"/>
<dbReference type="HGNC" id="HGNC:14132">
    <property type="gene designation" value="DOCK9"/>
</dbReference>
<dbReference type="HPA" id="ENSG00000088387">
    <property type="expression patterns" value="Low tissue specificity"/>
</dbReference>
<dbReference type="MIM" id="607325">
    <property type="type" value="gene"/>
</dbReference>
<dbReference type="neXtProt" id="NX_Q9BZ29"/>
<dbReference type="OpenTargets" id="ENSG00000088387"/>
<dbReference type="PharmGKB" id="PA134877754"/>
<dbReference type="VEuPathDB" id="HostDB:ENSG00000088387"/>
<dbReference type="eggNOG" id="KOG1997">
    <property type="taxonomic scope" value="Eukaryota"/>
</dbReference>
<dbReference type="GeneTree" id="ENSGT00940000155972"/>
<dbReference type="InParanoid" id="Q9BZ29"/>
<dbReference type="OrthoDB" id="47328at2759"/>
<dbReference type="PAN-GO" id="Q9BZ29">
    <property type="GO annotations" value="2 GO annotations based on evolutionary models"/>
</dbReference>
<dbReference type="PhylomeDB" id="Q9BZ29"/>
<dbReference type="TreeFam" id="TF313629"/>
<dbReference type="PathwayCommons" id="Q9BZ29"/>
<dbReference type="Reactome" id="R-HSA-9013148">
    <property type="pathway name" value="CDC42 GTPase cycle"/>
</dbReference>
<dbReference type="Reactome" id="R-HSA-9013149">
    <property type="pathway name" value="RAC1 GTPase cycle"/>
</dbReference>
<dbReference type="Reactome" id="R-HSA-983231">
    <property type="pathway name" value="Factors involved in megakaryocyte development and platelet production"/>
</dbReference>
<dbReference type="SignaLink" id="Q9BZ29"/>
<dbReference type="BioGRID-ORCS" id="23348">
    <property type="hits" value="10 hits in 1155 CRISPR screens"/>
</dbReference>
<dbReference type="CD-CODE" id="FB4E32DD">
    <property type="entry name" value="Presynaptic clusters and postsynaptic densities"/>
</dbReference>
<dbReference type="ChiTaRS" id="DOCK9">
    <property type="organism name" value="human"/>
</dbReference>
<dbReference type="EvolutionaryTrace" id="Q9BZ29"/>
<dbReference type="GeneWiki" id="Dock9"/>
<dbReference type="GenomeRNAi" id="23348"/>
<dbReference type="Pharos" id="Q9BZ29">
    <property type="development level" value="Tbio"/>
</dbReference>
<dbReference type="PRO" id="PR:Q9BZ29"/>
<dbReference type="Proteomes" id="UP000005640">
    <property type="component" value="Chromosome 13"/>
</dbReference>
<dbReference type="RNAct" id="Q9BZ29">
    <property type="molecule type" value="protein"/>
</dbReference>
<dbReference type="Bgee" id="ENSG00000088387">
    <property type="expression patterns" value="Expressed in calcaneal tendon and 207 other cell types or tissues"/>
</dbReference>
<dbReference type="ExpressionAtlas" id="Q9BZ29">
    <property type="expression patterns" value="baseline and differential"/>
</dbReference>
<dbReference type="GO" id="GO:0005829">
    <property type="term" value="C:cytosol"/>
    <property type="evidence" value="ECO:0000304"/>
    <property type="project" value="Reactome"/>
</dbReference>
<dbReference type="GO" id="GO:0012505">
    <property type="term" value="C:endomembrane system"/>
    <property type="evidence" value="ECO:0007669"/>
    <property type="project" value="UniProtKB-SubCell"/>
</dbReference>
<dbReference type="GO" id="GO:0016020">
    <property type="term" value="C:membrane"/>
    <property type="evidence" value="ECO:0007005"/>
    <property type="project" value="UniProtKB"/>
</dbReference>
<dbReference type="GO" id="GO:0045296">
    <property type="term" value="F:cadherin binding"/>
    <property type="evidence" value="ECO:0007005"/>
    <property type="project" value="BHF-UCL"/>
</dbReference>
<dbReference type="GO" id="GO:0005085">
    <property type="term" value="F:guanyl-nucleotide exchange factor activity"/>
    <property type="evidence" value="ECO:0000250"/>
    <property type="project" value="UniProtKB"/>
</dbReference>
<dbReference type="GO" id="GO:0043547">
    <property type="term" value="P:positive regulation of GTPase activity"/>
    <property type="evidence" value="ECO:0000250"/>
    <property type="project" value="UniProtKB"/>
</dbReference>
<dbReference type="GO" id="GO:0035023">
    <property type="term" value="P:regulation of Rho protein signal transduction"/>
    <property type="evidence" value="ECO:0000318"/>
    <property type="project" value="GO_Central"/>
</dbReference>
<dbReference type="GO" id="GO:0007264">
    <property type="term" value="P:small GTPase-mediated signal transduction"/>
    <property type="evidence" value="ECO:0007669"/>
    <property type="project" value="InterPro"/>
</dbReference>
<dbReference type="CDD" id="cd08697">
    <property type="entry name" value="C2_Dock-D"/>
    <property type="match status" value="1"/>
</dbReference>
<dbReference type="CDD" id="cd11698">
    <property type="entry name" value="DHR2_DOCK9"/>
    <property type="match status" value="1"/>
</dbReference>
<dbReference type="CDD" id="cd13267">
    <property type="entry name" value="PH_DOCK-D"/>
    <property type="match status" value="1"/>
</dbReference>
<dbReference type="FunFam" id="1.20.58.740:FF:000001">
    <property type="entry name" value="dedicator of cytokinesis protein 9 isoform X1"/>
    <property type="match status" value="1"/>
</dbReference>
<dbReference type="FunFam" id="2.30.29.30:FF:000016">
    <property type="entry name" value="dedicator of cytokinesis protein 9 isoform X1"/>
    <property type="match status" value="1"/>
</dbReference>
<dbReference type="FunFam" id="2.60.40.150:FF:000015">
    <property type="entry name" value="dedicator of cytokinesis protein 9 isoform X1"/>
    <property type="match status" value="1"/>
</dbReference>
<dbReference type="FunFam" id="1.25.40.410:FF:000001">
    <property type="entry name" value="dedicator of cytokinesis protein 9 isoform X2"/>
    <property type="match status" value="1"/>
</dbReference>
<dbReference type="Gene3D" id="1.20.58.740">
    <property type="match status" value="1"/>
</dbReference>
<dbReference type="Gene3D" id="1.25.40.410">
    <property type="match status" value="1"/>
</dbReference>
<dbReference type="Gene3D" id="2.60.40.150">
    <property type="entry name" value="C2 domain"/>
    <property type="match status" value="1"/>
</dbReference>
<dbReference type="Gene3D" id="2.30.29.30">
    <property type="entry name" value="Pleckstrin-homology domain (PH domain)/Phosphotyrosine-binding domain (PTB)"/>
    <property type="match status" value="1"/>
</dbReference>
<dbReference type="InterPro" id="IPR016024">
    <property type="entry name" value="ARM-type_fold"/>
</dbReference>
<dbReference type="InterPro" id="IPR037809">
    <property type="entry name" value="C2_Dock-D"/>
</dbReference>
<dbReference type="InterPro" id="IPR027007">
    <property type="entry name" value="C2_DOCK-type_domain"/>
</dbReference>
<dbReference type="InterPro" id="IPR035892">
    <property type="entry name" value="C2_domain_sf"/>
</dbReference>
<dbReference type="InterPro" id="IPR026791">
    <property type="entry name" value="DOCK"/>
</dbReference>
<dbReference type="InterPro" id="IPR021816">
    <property type="entry name" value="DOCK_C/D_N"/>
</dbReference>
<dbReference type="InterPro" id="IPR043161">
    <property type="entry name" value="DOCK_C_lobe_A"/>
</dbReference>
<dbReference type="InterPro" id="IPR043162">
    <property type="entry name" value="DOCK_C_lobe_C"/>
</dbReference>
<dbReference type="InterPro" id="IPR027357">
    <property type="entry name" value="DOCKER_dom"/>
</dbReference>
<dbReference type="InterPro" id="IPR046769">
    <property type="entry name" value="DOCKER_Lobe_A"/>
</dbReference>
<dbReference type="InterPro" id="IPR046770">
    <property type="entry name" value="DOCKER_Lobe_B"/>
</dbReference>
<dbReference type="InterPro" id="IPR046773">
    <property type="entry name" value="DOCKER_Lobe_C"/>
</dbReference>
<dbReference type="InterPro" id="IPR011993">
    <property type="entry name" value="PH-like_dom_sf"/>
</dbReference>
<dbReference type="InterPro" id="IPR001849">
    <property type="entry name" value="PH_domain"/>
</dbReference>
<dbReference type="PANTHER" id="PTHR23317">
    <property type="entry name" value="DEDICATOR OF CYTOKINESIS DOCK"/>
    <property type="match status" value="1"/>
</dbReference>
<dbReference type="PANTHER" id="PTHR23317:SF77">
    <property type="entry name" value="DEDICATOR OF CYTOKINESIS PROTEIN 9"/>
    <property type="match status" value="1"/>
</dbReference>
<dbReference type="Pfam" id="PF06920">
    <property type="entry name" value="DHR-2_Lobe_A"/>
    <property type="match status" value="1"/>
</dbReference>
<dbReference type="Pfam" id="PF20422">
    <property type="entry name" value="DHR-2_Lobe_B"/>
    <property type="match status" value="1"/>
</dbReference>
<dbReference type="Pfam" id="PF20421">
    <property type="entry name" value="DHR-2_Lobe_C"/>
    <property type="match status" value="1"/>
</dbReference>
<dbReference type="Pfam" id="PF14429">
    <property type="entry name" value="DOCK-C2"/>
    <property type="match status" value="1"/>
</dbReference>
<dbReference type="Pfam" id="PF11878">
    <property type="entry name" value="DOCK_C-D_N"/>
    <property type="match status" value="1"/>
</dbReference>
<dbReference type="Pfam" id="PF00169">
    <property type="entry name" value="PH"/>
    <property type="match status" value="1"/>
</dbReference>
<dbReference type="SMART" id="SM00233">
    <property type="entry name" value="PH"/>
    <property type="match status" value="1"/>
</dbReference>
<dbReference type="SUPFAM" id="SSF48371">
    <property type="entry name" value="ARM repeat"/>
    <property type="match status" value="1"/>
</dbReference>
<dbReference type="SUPFAM" id="SSF50729">
    <property type="entry name" value="PH domain-like"/>
    <property type="match status" value="1"/>
</dbReference>
<dbReference type="PROSITE" id="PS51650">
    <property type="entry name" value="C2_DOCK"/>
    <property type="match status" value="1"/>
</dbReference>
<dbReference type="PROSITE" id="PS51651">
    <property type="entry name" value="DOCKER"/>
    <property type="match status" value="1"/>
</dbReference>
<dbReference type="PROSITE" id="PS50003">
    <property type="entry name" value="PH_DOMAIN"/>
    <property type="match status" value="1"/>
</dbReference>
<evidence type="ECO:0000250" key="1">
    <source>
        <dbReference type="UniProtKB" id="Q8BIK4"/>
    </source>
</evidence>
<evidence type="ECO:0000255" key="2"/>
<evidence type="ECO:0000255" key="3">
    <source>
        <dbReference type="PROSITE-ProRule" id="PRU00145"/>
    </source>
</evidence>
<evidence type="ECO:0000255" key="4">
    <source>
        <dbReference type="PROSITE-ProRule" id="PRU00983"/>
    </source>
</evidence>
<evidence type="ECO:0000255" key="5">
    <source>
        <dbReference type="PROSITE-ProRule" id="PRU00984"/>
    </source>
</evidence>
<evidence type="ECO:0000256" key="6">
    <source>
        <dbReference type="SAM" id="MobiDB-lite"/>
    </source>
</evidence>
<evidence type="ECO:0000269" key="7">
    <source>
    </source>
</evidence>
<evidence type="ECO:0000269" key="8">
    <source>
    </source>
</evidence>
<evidence type="ECO:0000303" key="9">
    <source>
    </source>
</evidence>
<evidence type="ECO:0000303" key="10">
    <source>
    </source>
</evidence>
<evidence type="ECO:0000303" key="11">
    <source>
    </source>
</evidence>
<evidence type="ECO:0000305" key="12"/>
<evidence type="ECO:0000312" key="13">
    <source>
        <dbReference type="HGNC" id="HGNC:14132"/>
    </source>
</evidence>
<evidence type="ECO:0007744" key="14">
    <source>
    </source>
</evidence>
<evidence type="ECO:0007744" key="15">
    <source>
    </source>
</evidence>
<evidence type="ECO:0007744" key="16">
    <source>
    </source>
</evidence>
<evidence type="ECO:0007744" key="17">
    <source>
    </source>
</evidence>
<evidence type="ECO:0007744" key="18">
    <source>
    </source>
</evidence>
<evidence type="ECO:0007829" key="19">
    <source>
        <dbReference type="PDB" id="1WG7"/>
    </source>
</evidence>
<evidence type="ECO:0007829" key="20">
    <source>
        <dbReference type="PDB" id="2WM9"/>
    </source>
</evidence>
<evidence type="ECO:0007829" key="21">
    <source>
        <dbReference type="PDB" id="2WMO"/>
    </source>
</evidence>
<organism>
    <name type="scientific">Homo sapiens</name>
    <name type="common">Human</name>
    <dbReference type="NCBI Taxonomy" id="9606"/>
    <lineage>
        <taxon>Eukaryota</taxon>
        <taxon>Metazoa</taxon>
        <taxon>Chordata</taxon>
        <taxon>Craniata</taxon>
        <taxon>Vertebrata</taxon>
        <taxon>Euteleostomi</taxon>
        <taxon>Mammalia</taxon>
        <taxon>Eutheria</taxon>
        <taxon>Euarchontoglires</taxon>
        <taxon>Primates</taxon>
        <taxon>Haplorrhini</taxon>
        <taxon>Catarrhini</taxon>
        <taxon>Hominidae</taxon>
        <taxon>Homo</taxon>
    </lineage>
</organism>
<proteinExistence type="evidence at protein level"/>
<name>DOCK9_HUMAN</name>
<accession>Q9BZ29</accession>
<accession>B3KX25</accession>
<accession>E9PFM9</accession>
<accession>Q5JUD4</accession>
<accession>Q5JUD6</accession>
<accession>Q5T2Q1</accession>
<accession>Q5TAN8</accession>
<accession>Q9BZ25</accession>
<accession>Q9BZ26</accession>
<accession>Q9BZ27</accession>
<accession>Q9BZ28</accession>
<accession>Q9UPU4</accession>
<reference key="1">
    <citation type="journal article" date="2002" name="Nat. Cell Biol.">
        <title>Zizimin1, a novel Cdc42 activator, reveals a new GEF domain for Rho proteins.</title>
        <authorList>
            <person name="Meller N."/>
            <person name="Irani-Tehrani M."/>
            <person name="Kiosses W.B."/>
            <person name="Del Pozo M.A."/>
            <person name="Schwartz M.A."/>
        </authorList>
    </citation>
    <scope>NUCLEOTIDE SEQUENCE (ISOFORM 1)</scope>
    <scope>FUNCTION</scope>
    <scope>INTERACTION WITH CDC42</scope>
    <scope>GEF ACTIVITY</scope>
    <scope>TISSUE SPECIFICITY</scope>
</reference>
<reference key="2">
    <citation type="journal article" date="1999" name="DNA Res.">
        <title>Prediction of the coding sequences of unidentified human genes. XIV. The complete sequences of 100 new cDNA clones from brain which code for large proteins in vitro.</title>
        <authorList>
            <person name="Kikuno R."/>
            <person name="Nagase T."/>
            <person name="Ishikawa K."/>
            <person name="Hirosawa M."/>
            <person name="Miyajima N."/>
            <person name="Tanaka A."/>
            <person name="Kotani H."/>
            <person name="Nomura N."/>
            <person name="Ohara O."/>
        </authorList>
    </citation>
    <scope>NUCLEOTIDE SEQUENCE [LARGE SCALE MRNA] (ISOFORM 2)</scope>
    <source>
        <tissue>Brain</tissue>
    </source>
</reference>
<reference key="3">
    <citation type="journal article" date="2002" name="DNA Res.">
        <title>Construction of expression-ready cDNA clones for KIAA genes: manual curation of 330 KIAA cDNA clones.</title>
        <authorList>
            <person name="Nakajima D."/>
            <person name="Okazaki N."/>
            <person name="Yamakawa H."/>
            <person name="Kikuno R."/>
            <person name="Ohara O."/>
            <person name="Nagase T."/>
        </authorList>
    </citation>
    <scope>SEQUENCE REVISION</scope>
</reference>
<reference key="4">
    <citation type="journal article" date="2004" name="Nat. Genet.">
        <title>Complete sequencing and characterization of 21,243 full-length human cDNAs.</title>
        <authorList>
            <person name="Ota T."/>
            <person name="Suzuki Y."/>
            <person name="Nishikawa T."/>
            <person name="Otsuki T."/>
            <person name="Sugiyama T."/>
            <person name="Irie R."/>
            <person name="Wakamatsu A."/>
            <person name="Hayashi K."/>
            <person name="Sato H."/>
            <person name="Nagai K."/>
            <person name="Kimura K."/>
            <person name="Makita H."/>
            <person name="Sekine M."/>
            <person name="Obayashi M."/>
            <person name="Nishi T."/>
            <person name="Shibahara T."/>
            <person name="Tanaka T."/>
            <person name="Ishii S."/>
            <person name="Yamamoto J."/>
            <person name="Saito K."/>
            <person name="Kawai Y."/>
            <person name="Isono Y."/>
            <person name="Nakamura Y."/>
            <person name="Nagahari K."/>
            <person name="Murakami K."/>
            <person name="Yasuda T."/>
            <person name="Iwayanagi T."/>
            <person name="Wagatsuma M."/>
            <person name="Shiratori A."/>
            <person name="Sudo H."/>
            <person name="Hosoiri T."/>
            <person name="Kaku Y."/>
            <person name="Kodaira H."/>
            <person name="Kondo H."/>
            <person name="Sugawara M."/>
            <person name="Takahashi M."/>
            <person name="Kanda K."/>
            <person name="Yokoi T."/>
            <person name="Furuya T."/>
            <person name="Kikkawa E."/>
            <person name="Omura Y."/>
            <person name="Abe K."/>
            <person name="Kamihara K."/>
            <person name="Katsuta N."/>
            <person name="Sato K."/>
            <person name="Tanikawa M."/>
            <person name="Yamazaki M."/>
            <person name="Ninomiya K."/>
            <person name="Ishibashi T."/>
            <person name="Yamashita H."/>
            <person name="Murakawa K."/>
            <person name="Fujimori K."/>
            <person name="Tanai H."/>
            <person name="Kimata M."/>
            <person name="Watanabe M."/>
            <person name="Hiraoka S."/>
            <person name="Chiba Y."/>
            <person name="Ishida S."/>
            <person name="Ono Y."/>
            <person name="Takiguchi S."/>
            <person name="Watanabe S."/>
            <person name="Yosida M."/>
            <person name="Hotuta T."/>
            <person name="Kusano J."/>
            <person name="Kanehori K."/>
            <person name="Takahashi-Fujii A."/>
            <person name="Hara H."/>
            <person name="Tanase T.-O."/>
            <person name="Nomura Y."/>
            <person name="Togiya S."/>
            <person name="Komai F."/>
            <person name="Hara R."/>
            <person name="Takeuchi K."/>
            <person name="Arita M."/>
            <person name="Imose N."/>
            <person name="Musashino K."/>
            <person name="Yuuki H."/>
            <person name="Oshima A."/>
            <person name="Sasaki N."/>
            <person name="Aotsuka S."/>
            <person name="Yoshikawa Y."/>
            <person name="Matsunawa H."/>
            <person name="Ichihara T."/>
            <person name="Shiohata N."/>
            <person name="Sano S."/>
            <person name="Moriya S."/>
            <person name="Momiyama H."/>
            <person name="Satoh N."/>
            <person name="Takami S."/>
            <person name="Terashima Y."/>
            <person name="Suzuki O."/>
            <person name="Nakagawa S."/>
            <person name="Senoh A."/>
            <person name="Mizoguchi H."/>
            <person name="Goto Y."/>
            <person name="Shimizu F."/>
            <person name="Wakebe H."/>
            <person name="Hishigaki H."/>
            <person name="Watanabe T."/>
            <person name="Sugiyama A."/>
            <person name="Takemoto M."/>
            <person name="Kawakami B."/>
            <person name="Yamazaki M."/>
            <person name="Watanabe K."/>
            <person name="Kumagai A."/>
            <person name="Itakura S."/>
            <person name="Fukuzumi Y."/>
            <person name="Fujimori Y."/>
            <person name="Komiyama M."/>
            <person name="Tashiro H."/>
            <person name="Tanigami A."/>
            <person name="Fujiwara T."/>
            <person name="Ono T."/>
            <person name="Yamada K."/>
            <person name="Fujii Y."/>
            <person name="Ozaki K."/>
            <person name="Hirao M."/>
            <person name="Ohmori Y."/>
            <person name="Kawabata A."/>
            <person name="Hikiji T."/>
            <person name="Kobatake N."/>
            <person name="Inagaki H."/>
            <person name="Ikema Y."/>
            <person name="Okamoto S."/>
            <person name="Okitani R."/>
            <person name="Kawakami T."/>
            <person name="Noguchi S."/>
            <person name="Itoh T."/>
            <person name="Shigeta K."/>
            <person name="Senba T."/>
            <person name="Matsumura K."/>
            <person name="Nakajima Y."/>
            <person name="Mizuno T."/>
            <person name="Morinaga M."/>
            <person name="Sasaki M."/>
            <person name="Togashi T."/>
            <person name="Oyama M."/>
            <person name="Hata H."/>
            <person name="Watanabe M."/>
            <person name="Komatsu T."/>
            <person name="Mizushima-Sugano J."/>
            <person name="Satoh T."/>
            <person name="Shirai Y."/>
            <person name="Takahashi Y."/>
            <person name="Nakagawa K."/>
            <person name="Okumura K."/>
            <person name="Nagase T."/>
            <person name="Nomura N."/>
            <person name="Kikuchi H."/>
            <person name="Masuho Y."/>
            <person name="Yamashita R."/>
            <person name="Nakai K."/>
            <person name="Yada T."/>
            <person name="Nakamura Y."/>
            <person name="Ohara O."/>
            <person name="Isogai T."/>
            <person name="Sugano S."/>
        </authorList>
    </citation>
    <scope>NUCLEOTIDE SEQUENCE [LARGE SCALE MRNA] (ISOFORM 5)</scope>
    <source>
        <tissue>Uterus</tissue>
    </source>
</reference>
<reference key="5">
    <citation type="journal article" date="2004" name="Nature">
        <title>The DNA sequence and analysis of human chromosome 13.</title>
        <authorList>
            <person name="Dunham A."/>
            <person name="Matthews L.H."/>
            <person name="Burton J."/>
            <person name="Ashurst J.L."/>
            <person name="Howe K.L."/>
            <person name="Ashcroft K.J."/>
            <person name="Beare D.M."/>
            <person name="Burford D.C."/>
            <person name="Hunt S.E."/>
            <person name="Griffiths-Jones S."/>
            <person name="Jones M.C."/>
            <person name="Keenan S.J."/>
            <person name="Oliver K."/>
            <person name="Scott C.E."/>
            <person name="Ainscough R."/>
            <person name="Almeida J.P."/>
            <person name="Ambrose K.D."/>
            <person name="Andrews D.T."/>
            <person name="Ashwell R.I.S."/>
            <person name="Babbage A.K."/>
            <person name="Bagguley C.L."/>
            <person name="Bailey J."/>
            <person name="Bannerjee R."/>
            <person name="Barlow K.F."/>
            <person name="Bates K."/>
            <person name="Beasley H."/>
            <person name="Bird C.P."/>
            <person name="Bray-Allen S."/>
            <person name="Brown A.J."/>
            <person name="Brown J.Y."/>
            <person name="Burrill W."/>
            <person name="Carder C."/>
            <person name="Carter N.P."/>
            <person name="Chapman J.C."/>
            <person name="Clamp M.E."/>
            <person name="Clark S.Y."/>
            <person name="Clarke G."/>
            <person name="Clee C.M."/>
            <person name="Clegg S.C."/>
            <person name="Cobley V."/>
            <person name="Collins J.E."/>
            <person name="Corby N."/>
            <person name="Coville G.J."/>
            <person name="Deloukas P."/>
            <person name="Dhami P."/>
            <person name="Dunham I."/>
            <person name="Dunn M."/>
            <person name="Earthrowl M.E."/>
            <person name="Ellington A.G."/>
            <person name="Faulkner L."/>
            <person name="Frankish A.G."/>
            <person name="Frankland J."/>
            <person name="French L."/>
            <person name="Garner P."/>
            <person name="Garnett J."/>
            <person name="Gilbert J.G.R."/>
            <person name="Gilson C.J."/>
            <person name="Ghori J."/>
            <person name="Grafham D.V."/>
            <person name="Gribble S.M."/>
            <person name="Griffiths C."/>
            <person name="Hall R.E."/>
            <person name="Hammond S."/>
            <person name="Harley J.L."/>
            <person name="Hart E.A."/>
            <person name="Heath P.D."/>
            <person name="Howden P.J."/>
            <person name="Huckle E.J."/>
            <person name="Hunt P.J."/>
            <person name="Hunt A.R."/>
            <person name="Johnson C."/>
            <person name="Johnson D."/>
            <person name="Kay M."/>
            <person name="Kimberley A.M."/>
            <person name="King A."/>
            <person name="Laird G.K."/>
            <person name="Langford C.J."/>
            <person name="Lawlor S."/>
            <person name="Leongamornlert D.A."/>
            <person name="Lloyd D.M."/>
            <person name="Lloyd C."/>
            <person name="Loveland J.E."/>
            <person name="Lovell J."/>
            <person name="Martin S."/>
            <person name="Mashreghi-Mohammadi M."/>
            <person name="McLaren S.J."/>
            <person name="McMurray A."/>
            <person name="Milne S."/>
            <person name="Moore M.J.F."/>
            <person name="Nickerson T."/>
            <person name="Palmer S.A."/>
            <person name="Pearce A.V."/>
            <person name="Peck A.I."/>
            <person name="Pelan S."/>
            <person name="Phillimore B."/>
            <person name="Porter K.M."/>
            <person name="Rice C.M."/>
            <person name="Searle S."/>
            <person name="Sehra H.K."/>
            <person name="Shownkeen R."/>
            <person name="Skuce C.D."/>
            <person name="Smith M."/>
            <person name="Steward C.A."/>
            <person name="Sycamore N."/>
            <person name="Tester J."/>
            <person name="Thomas D.W."/>
            <person name="Tracey A."/>
            <person name="Tromans A."/>
            <person name="Tubby B."/>
            <person name="Wall M."/>
            <person name="Wallis J.M."/>
            <person name="West A.P."/>
            <person name="Whitehead S.L."/>
            <person name="Willey D.L."/>
            <person name="Wilming L."/>
            <person name="Wray P.W."/>
            <person name="Wright M.W."/>
            <person name="Young L."/>
            <person name="Coulson A."/>
            <person name="Durbin R.M."/>
            <person name="Hubbard T."/>
            <person name="Sulston J.E."/>
            <person name="Beck S."/>
            <person name="Bentley D.R."/>
            <person name="Rogers J."/>
            <person name="Ross M.T."/>
        </authorList>
    </citation>
    <scope>NUCLEOTIDE SEQUENCE [LARGE SCALE GENOMIC DNA] (ISOFORMS 1; 2; 3 AND 4)</scope>
</reference>
<reference key="6">
    <citation type="journal article" date="2004" name="Genome Res.">
        <title>The status, quality, and expansion of the NIH full-length cDNA project: the Mammalian Gene Collection (MGC).</title>
        <authorList>
            <consortium name="The MGC Project Team"/>
        </authorList>
    </citation>
    <scope>NUCLEOTIDE SEQUENCE [LARGE SCALE MRNA] OF 1551-2069 (ISOFORM 4)</scope>
    <source>
        <tissue>Eye</tissue>
    </source>
</reference>
<reference key="7">
    <citation type="journal article" date="2002" name="J. Cell Sci.">
        <title>Identification of an evolutionarily conserved superfamily of DOCK180-related proteins with guanine nucleotide exchange activity.</title>
        <authorList>
            <person name="Cote J.-F."/>
            <person name="Vuori K."/>
        </authorList>
    </citation>
    <scope>NOMENCLATURE</scope>
    <scope>GEF ACTIVITY</scope>
</reference>
<reference key="8">
    <citation type="journal article" date="2006" name="Nat. Biotechnol.">
        <title>A probability-based approach for high-throughput protein phosphorylation analysis and site localization.</title>
        <authorList>
            <person name="Beausoleil S.A."/>
            <person name="Villen J."/>
            <person name="Gerber S.A."/>
            <person name="Rush J."/>
            <person name="Gygi S.P."/>
        </authorList>
    </citation>
    <scope>PHOSPHORYLATION [LARGE SCALE ANALYSIS] AT THR-1241</scope>
    <scope>IDENTIFICATION BY MASS SPECTROMETRY [LARGE SCALE ANALYSIS]</scope>
    <source>
        <tissue>Cervix carcinoma</tissue>
    </source>
</reference>
<reference key="9">
    <citation type="journal article" date="2008" name="Proc. Natl. Acad. Sci. U.S.A.">
        <title>A quantitative atlas of mitotic phosphorylation.</title>
        <authorList>
            <person name="Dephoure N."/>
            <person name="Zhou C."/>
            <person name="Villen J."/>
            <person name="Beausoleil S.A."/>
            <person name="Bakalarski C.E."/>
            <person name="Elledge S.J."/>
            <person name="Gygi S.P."/>
        </authorList>
    </citation>
    <scope>PHOSPHORYLATION [LARGE SCALE ANALYSIS] AT SER-21</scope>
    <scope>IDENTIFICATION BY MASS SPECTROMETRY [LARGE SCALE ANALYSIS]</scope>
    <source>
        <tissue>Cervix carcinoma</tissue>
    </source>
</reference>
<reference key="10">
    <citation type="journal article" date="2010" name="Sci. Signal.">
        <title>Quantitative phosphoproteomics reveals widespread full phosphorylation site occupancy during mitosis.</title>
        <authorList>
            <person name="Olsen J.V."/>
            <person name="Vermeulen M."/>
            <person name="Santamaria A."/>
            <person name="Kumar C."/>
            <person name="Miller M.L."/>
            <person name="Jensen L.J."/>
            <person name="Gnad F."/>
            <person name="Cox J."/>
            <person name="Jensen T.S."/>
            <person name="Nigg E.A."/>
            <person name="Brunak S."/>
            <person name="Mann M."/>
        </authorList>
    </citation>
    <scope>PHOSPHORYLATION [LARGE SCALE ANALYSIS] AT SER-1235 AND THR-1241</scope>
    <scope>IDENTIFICATION BY MASS SPECTROMETRY [LARGE SCALE ANALYSIS]</scope>
    <source>
        <tissue>Cervix carcinoma</tissue>
    </source>
</reference>
<reference key="11">
    <citation type="journal article" date="2011" name="BMC Syst. Biol.">
        <title>Initial characterization of the human central proteome.</title>
        <authorList>
            <person name="Burkard T.R."/>
            <person name="Planyavsky M."/>
            <person name="Kaupe I."/>
            <person name="Breitwieser F.P."/>
            <person name="Buerckstuemmer T."/>
            <person name="Bennett K.L."/>
            <person name="Superti-Furga G."/>
            <person name="Colinge J."/>
        </authorList>
    </citation>
    <scope>IDENTIFICATION BY MASS SPECTROMETRY [LARGE SCALE ANALYSIS]</scope>
</reference>
<reference key="12">
    <citation type="journal article" date="2013" name="J. Proteome Res.">
        <title>Toward a comprehensive characterization of a human cancer cell phosphoproteome.</title>
        <authorList>
            <person name="Zhou H."/>
            <person name="Di Palma S."/>
            <person name="Preisinger C."/>
            <person name="Peng M."/>
            <person name="Polat A.N."/>
            <person name="Heck A.J."/>
            <person name="Mohammed S."/>
        </authorList>
    </citation>
    <scope>PHOSPHORYLATION [LARGE SCALE ANALYSIS] AT SER-21; SER-32; SER-927; SER-1255 AND SER-1264</scope>
    <scope>IDENTIFICATION BY MASS SPECTROMETRY [LARGE SCALE ANALYSIS]</scope>
    <source>
        <tissue>Cervix carcinoma</tissue>
        <tissue>Erythroleukemia</tissue>
    </source>
</reference>
<reference key="13">
    <citation type="journal article" date="2014" name="J. Proteomics">
        <title>An enzyme assisted RP-RPLC approach for in-depth analysis of human liver phosphoproteome.</title>
        <authorList>
            <person name="Bian Y."/>
            <person name="Song C."/>
            <person name="Cheng K."/>
            <person name="Dong M."/>
            <person name="Wang F."/>
            <person name="Huang J."/>
            <person name="Sun D."/>
            <person name="Wang L."/>
            <person name="Ye M."/>
            <person name="Zou H."/>
        </authorList>
    </citation>
    <scope>PHOSPHORYLATION [LARGE SCALE ANALYSIS] AT SER-167 AND SER-170</scope>
    <scope>IDENTIFICATION BY MASS SPECTROMETRY [LARGE SCALE ANALYSIS]</scope>
    <source>
        <tissue>Liver</tissue>
    </source>
</reference>
<reference key="14">
    <citation type="submission" date="2004-11" db="PDB data bank">
        <title>Solution structure of pleckstrin homology domain from human KIAA1058 protein.</title>
        <authorList>
            <consortium name="RIKEN structural genomics initiative (RSGI)"/>
        </authorList>
    </citation>
    <scope>STRUCTURE BY NMR OF 165-301</scope>
</reference>
<reference key="15">
    <citation type="journal article" date="2009" name="Science">
        <title>Activation of Rho GTPases by DOCK exchange factors is mediated by a nucleotide sensor.</title>
        <authorList>
            <person name="Yang J."/>
            <person name="Zhang Z."/>
            <person name="Roe S.M."/>
            <person name="Marshall C.J."/>
            <person name="Barford D."/>
        </authorList>
    </citation>
    <scope>X-RAY CRYSTALLOGRAPHY (2.2 ANGSTROMS) OF 1605-2069 IN COMPLEX WITH CDC42</scope>
    <scope>FUNCTION</scope>
    <scope>SUBUNIT</scope>
</reference>
<comment type="function">
    <text evidence="7 8">Guanine nucleotide-exchange factor (GEF) that activates CDC42 by exchanging bound GDP for free GTP. Overexpression induces filopodia formation.</text>
</comment>
<comment type="subunit">
    <text evidence="7 8 12">Homodimer (Probable). Interacts preferentially with nucleotide-depleted CDC42.</text>
</comment>
<comment type="interaction">
    <interactant intactId="EBI-2695893">
        <id>Q9BZ29</id>
    </interactant>
    <interactant intactId="EBI-1040141">
        <id>Q15796</id>
        <label>SMAD2</label>
    </interactant>
    <organismsDiffer>false</organismsDiffer>
    <experiments>3</experiments>
</comment>
<comment type="interaction">
    <interactant intactId="EBI-2695893">
        <id>Q9BZ29</id>
    </interactant>
    <interactant intactId="EBI-347161">
        <id>P84022</id>
        <label>SMAD3</label>
    </interactant>
    <organismsDiffer>false</organismsDiffer>
    <experiments>3</experiments>
</comment>
<comment type="subcellular location">
    <subcellularLocation>
        <location evidence="12">Endomembrane system</location>
    </subcellularLocation>
    <text evidence="12">Associated with membranes.</text>
</comment>
<comment type="alternative products">
    <event type="alternative splicing"/>
    <isoform>
        <id>Q9BZ29-1</id>
        <name>1</name>
        <sequence type="displayed"/>
    </isoform>
    <isoform>
        <id>Q9BZ29-5</id>
        <name>2</name>
        <sequence type="described" ref="VSP_017128"/>
    </isoform>
    <isoform>
        <id>Q9BZ29-3</id>
        <name>3</name>
        <sequence type="described" ref="VSP_004024"/>
    </isoform>
    <isoform>
        <id>Q9BZ29-4</id>
        <name>4</name>
        <sequence type="described" ref="VSP_007709 VSP_007710"/>
    </isoform>
    <isoform>
        <id>Q9BZ29-6</id>
        <name>5</name>
        <sequence type="described" ref="VSP_017128 VSP_045683 VSP_045684"/>
    </isoform>
</comment>
<comment type="tissue specificity">
    <text evidence="7">Widely expressed, with highest expression in heart and placenta. Expressed at intermediate level in kidney, brain, lung and skeletal muscle.</text>
</comment>
<comment type="domain">
    <text>The DOCKER domain is necessary and sufficient for the GEF activity.</text>
</comment>
<comment type="miscellaneous">
    <text evidence="12">'Zizim' means 'spike' in Hebrew.</text>
</comment>
<comment type="miscellaneous">
    <molecule>Isoform 4</molecule>
    <text evidence="12">Produced by exon skipping that results in a frameshift.</text>
</comment>
<comment type="similarity">
    <text evidence="4">Belongs to the DOCK family.</text>
</comment>
<comment type="sequence caution" evidence="12">
    <conflict type="erroneous initiation">
        <sequence resource="EMBL-CDS" id="BAA83010"/>
    </conflict>
</comment>
<keyword id="KW-0002">3D-structure</keyword>
<keyword id="KW-0025">Alternative splicing</keyword>
<keyword id="KW-0175">Coiled coil</keyword>
<keyword id="KW-0344">Guanine-nucleotide releasing factor</keyword>
<keyword id="KW-0472">Membrane</keyword>
<keyword id="KW-0597">Phosphoprotein</keyword>
<keyword id="KW-1267">Proteomics identification</keyword>
<keyword id="KW-1185">Reference proteome</keyword>
<keyword id="KW-0677">Repeat</keyword>
<feature type="chain" id="PRO_0000189999" description="Dedicator of cytokinesis protein 9">
    <location>
        <begin position="1"/>
        <end position="2069"/>
    </location>
</feature>
<feature type="domain" description="PH" evidence="3">
    <location>
        <begin position="174"/>
        <end position="281"/>
    </location>
</feature>
<feature type="domain" description="C2 DOCK-type" evidence="4">
    <location>
        <begin position="640"/>
        <end position="818"/>
    </location>
</feature>
<feature type="domain" description="DOCKER" evidence="5">
    <location>
        <begin position="1605"/>
        <end position="2069"/>
    </location>
</feature>
<feature type="region of interest" description="Disordered" evidence="6">
    <location>
        <begin position="290"/>
        <end position="313"/>
    </location>
</feature>
<feature type="region of interest" description="Disordered" evidence="6">
    <location>
        <begin position="1241"/>
        <end position="1282"/>
    </location>
</feature>
<feature type="region of interest" description="Interaction with CDC42" evidence="7">
    <location>
        <begin position="1693"/>
        <end position="2069"/>
    </location>
</feature>
<feature type="coiled-coil region" evidence="2">
    <location>
        <begin position="1948"/>
        <end position="1982"/>
    </location>
</feature>
<feature type="coiled-coil region" evidence="2">
    <location>
        <begin position="2034"/>
        <end position="2067"/>
    </location>
</feature>
<feature type="compositionally biased region" description="Polar residues" evidence="6">
    <location>
        <begin position="1255"/>
        <end position="1267"/>
    </location>
</feature>
<feature type="compositionally biased region" description="Basic and acidic residues" evidence="6">
    <location>
        <begin position="1268"/>
        <end position="1280"/>
    </location>
</feature>
<feature type="modified residue" description="Phosphoserine" evidence="15 17">
    <location>
        <position position="21"/>
    </location>
</feature>
<feature type="modified residue" description="Phosphoserine" evidence="17">
    <location>
        <position position="32"/>
    </location>
</feature>
<feature type="modified residue" description="Phosphoserine" evidence="18">
    <location>
        <position position="167"/>
    </location>
</feature>
<feature type="modified residue" description="Phosphoserine" evidence="18">
    <location>
        <position position="170"/>
    </location>
</feature>
<feature type="modified residue" description="Phosphoserine" evidence="1">
    <location>
        <position position="433"/>
    </location>
</feature>
<feature type="modified residue" description="Phosphoserine" evidence="1">
    <location>
        <position position="443"/>
    </location>
</feature>
<feature type="modified residue" description="Phosphoserine" evidence="17">
    <location>
        <position position="927"/>
    </location>
</feature>
<feature type="modified residue" description="Phosphoserine" evidence="16">
    <location>
        <position position="1235"/>
    </location>
</feature>
<feature type="modified residue" description="Phosphothreonine" evidence="14 16">
    <location>
        <position position="1241"/>
    </location>
</feature>
<feature type="modified residue" description="Phosphoserine" evidence="17">
    <location>
        <position position="1255"/>
    </location>
</feature>
<feature type="modified residue" description="Phosphoserine" evidence="1">
    <location>
        <position position="1261"/>
    </location>
</feature>
<feature type="modified residue" description="Phosphoserine" evidence="17">
    <location>
        <position position="1264"/>
    </location>
</feature>
<feature type="splice variant" id="VSP_017128" description="In isoform 2 and isoform 5." evidence="9 10">
    <original>MSQPPLLPASAETRKFTRALSKPGTAAELRQSVSEVVRGSVLL</original>
    <variation>MQADKCRTSSRSVKKELVIESPLQYKDAAQGEVEAESPGPVP</variation>
    <location>
        <begin position="1"/>
        <end position="43"/>
    </location>
</feature>
<feature type="splice variant" id="VSP_045683" description="In isoform 5." evidence="10">
    <original>ASPYTTSTPNINSVRNADSRG</original>
    <variation>GNAPCSCGLLSTITLKVSWSQ</variation>
    <location>
        <begin position="1234"/>
        <end position="1254"/>
    </location>
</feature>
<feature type="splice variant" id="VSP_045684" description="In isoform 5." evidence="10">
    <location>
        <begin position="1255"/>
        <end position="2069"/>
    </location>
</feature>
<feature type="splice variant" id="VSP_004024" description="In isoform 3." evidence="12">
    <original>RTGMMHARLQQLGSLDNSLTFNHS</original>
    <variation>SVRKISSVLGISVDNG</variation>
    <location>
        <begin position="1355"/>
        <end position="1378"/>
    </location>
</feature>
<feature type="splice variant" id="VSP_007709" description="In isoform 4." evidence="11">
    <location>
        <begin position="1791"/>
        <end position="1804"/>
    </location>
</feature>
<feature type="splice variant" id="VSP_007710" description="In isoform 4." evidence="11">
    <original>LG</original>
    <variation>ICPLEEKTSVLPNSLHIFNAISGTPTSTMVHGMTSSSSVV</variation>
    <location>
        <begin position="2068"/>
        <end position="2069"/>
    </location>
</feature>
<feature type="sequence variant" id="VAR_062000" description="In dbSNP:rs56010605.">
    <original>A</original>
    <variation>T</variation>
    <location>
        <position position="455"/>
    </location>
</feature>
<feature type="sequence variant" id="VAR_053067" description="In dbSNP:rs16955934.">
    <original>K</original>
    <variation>E</variation>
    <location>
        <position position="1416"/>
    </location>
</feature>
<feature type="sequence conflict" description="In Ref. 4; BAG54337." evidence="12" ref="4">
    <original>S</original>
    <variation>P</variation>
    <location>
        <position position="170"/>
    </location>
</feature>
<feature type="sequence conflict" description="In Ref. 4; BAG54337." evidence="12" ref="4">
    <original>S</original>
    <variation>P</variation>
    <location>
        <position position="296"/>
    </location>
</feature>
<feature type="strand" evidence="19">
    <location>
        <begin position="178"/>
        <end position="183"/>
    </location>
</feature>
<feature type="helix" evidence="19">
    <location>
        <begin position="190"/>
        <end position="194"/>
    </location>
</feature>
<feature type="strand" evidence="19">
    <location>
        <begin position="198"/>
        <end position="206"/>
    </location>
</feature>
<feature type="strand" evidence="19">
    <location>
        <begin position="208"/>
        <end position="210"/>
    </location>
</feature>
<feature type="strand" evidence="19">
    <location>
        <begin position="212"/>
        <end position="220"/>
    </location>
</feature>
<feature type="strand" evidence="19">
    <location>
        <begin position="227"/>
        <end position="230"/>
    </location>
</feature>
<feature type="turn" evidence="19">
    <location>
        <begin position="232"/>
        <end position="234"/>
    </location>
</feature>
<feature type="strand" evidence="19">
    <location>
        <begin position="248"/>
        <end position="252"/>
    </location>
</feature>
<feature type="strand" evidence="19">
    <location>
        <begin position="254"/>
        <end position="256"/>
    </location>
</feature>
<feature type="strand" evidence="19">
    <location>
        <begin position="258"/>
        <end position="262"/>
    </location>
</feature>
<feature type="helix" evidence="19">
    <location>
        <begin position="266"/>
        <end position="291"/>
    </location>
</feature>
<feature type="helix" evidence="20">
    <location>
        <begin position="1610"/>
        <end position="1628"/>
    </location>
</feature>
<feature type="helix" evidence="20">
    <location>
        <begin position="1631"/>
        <end position="1651"/>
    </location>
</feature>
<feature type="strand" evidence="20">
    <location>
        <begin position="1677"/>
        <end position="1679"/>
    </location>
</feature>
<feature type="helix" evidence="20">
    <location>
        <begin position="1682"/>
        <end position="1685"/>
    </location>
</feature>
<feature type="turn" evidence="20">
    <location>
        <begin position="1686"/>
        <end position="1688"/>
    </location>
</feature>
<feature type="helix" evidence="20">
    <location>
        <begin position="1690"/>
        <end position="1695"/>
    </location>
</feature>
<feature type="strand" evidence="20">
    <location>
        <begin position="1708"/>
        <end position="1710"/>
    </location>
</feature>
<feature type="helix" evidence="20">
    <location>
        <begin position="1711"/>
        <end position="1727"/>
    </location>
</feature>
<feature type="helix" evidence="20">
    <location>
        <begin position="1731"/>
        <end position="1733"/>
    </location>
</feature>
<feature type="helix" evidence="20">
    <location>
        <begin position="1734"/>
        <end position="1738"/>
    </location>
</feature>
<feature type="turn" evidence="20">
    <location>
        <begin position="1739"/>
        <end position="1741"/>
    </location>
</feature>
<feature type="helix" evidence="20">
    <location>
        <begin position="1742"/>
        <end position="1747"/>
    </location>
</feature>
<feature type="helix" evidence="20">
    <location>
        <begin position="1751"/>
        <end position="1774"/>
    </location>
</feature>
<feature type="strand" evidence="20">
    <location>
        <begin position="1781"/>
        <end position="1788"/>
    </location>
</feature>
<feature type="helix" evidence="20">
    <location>
        <begin position="1808"/>
        <end position="1810"/>
    </location>
</feature>
<feature type="strand" evidence="20">
    <location>
        <begin position="1814"/>
        <end position="1820"/>
    </location>
</feature>
<feature type="helix" evidence="20">
    <location>
        <begin position="1825"/>
        <end position="1840"/>
    </location>
</feature>
<feature type="helix" evidence="20">
    <location>
        <begin position="1842"/>
        <end position="1844"/>
    </location>
</feature>
<feature type="strand" evidence="20">
    <location>
        <begin position="1845"/>
        <end position="1848"/>
    </location>
</feature>
<feature type="helix" evidence="20">
    <location>
        <begin position="1856"/>
        <end position="1858"/>
    </location>
</feature>
<feature type="strand" evidence="20">
    <location>
        <begin position="1863"/>
        <end position="1873"/>
    </location>
</feature>
<feature type="helix" evidence="20">
    <location>
        <begin position="1877"/>
        <end position="1882"/>
    </location>
</feature>
<feature type="helix" evidence="20">
    <location>
        <begin position="1887"/>
        <end position="1889"/>
    </location>
</feature>
<feature type="strand" evidence="20">
    <location>
        <begin position="1890"/>
        <end position="1902"/>
    </location>
</feature>
<feature type="strand" evidence="21">
    <location>
        <begin position="1904"/>
        <end position="1909"/>
    </location>
</feature>
<feature type="turn" evidence="20">
    <location>
        <begin position="1912"/>
        <end position="1914"/>
    </location>
</feature>
<feature type="strand" evidence="20">
    <location>
        <begin position="1916"/>
        <end position="1929"/>
    </location>
</feature>
<feature type="strand" evidence="20">
    <location>
        <begin position="1931"/>
        <end position="1945"/>
    </location>
</feature>
<feature type="helix" evidence="20">
    <location>
        <begin position="1947"/>
        <end position="1967"/>
    </location>
</feature>
<feature type="helix" evidence="20">
    <location>
        <begin position="1973"/>
        <end position="1984"/>
    </location>
</feature>
<feature type="strand" evidence="20">
    <location>
        <begin position="1987"/>
        <end position="1989"/>
    </location>
</feature>
<feature type="helix" evidence="20">
    <location>
        <begin position="1993"/>
        <end position="1999"/>
    </location>
</feature>
<feature type="helix" evidence="20">
    <location>
        <begin position="2013"/>
        <end position="2037"/>
    </location>
</feature>
<feature type="turn" evidence="20">
    <location>
        <begin position="2041"/>
        <end position="2043"/>
    </location>
</feature>
<feature type="helix" evidence="20">
    <location>
        <begin position="2044"/>
        <end position="2064"/>
    </location>
</feature>
<sequence>MSQPPLLPASAETRKFTRALSKPGTAAELRQSVSEVVRGSVLLAKPKLIEPLDYENVIVQKKTQILNDCLREMLLFPYDDFQTAILRRQGRYICSTVPAKAEEEAQSLFVTECIKTYNSDWHLVNYKYEDYSGEFRQLPNKVVKLDKLPVHVYEVDEEVDKDEDAASLGSQKGGITKHGWLYKGNMNSAISVTMRSFKRRFFHLIQLGDGSYNLNFYKDEKISKEPKGSIFLDSCMGVVQNNKVRRFAFELKMQDKSSYLLAADSEVEMEEWITILNKILQLNFEAAMQEKRNGDSHEDDEQSKLEGSGSGLDSYLPELAKSAREAEIKLKSESRVKLFYLDPDAQKLDFSSAEPEVKSFEEKFGKRILVKCNDLSFNLQCCVAENEEGPTTNVEPFFVTLSLFDIKYNRKISADFHVDLNHFSVRQMLATTSPALMNGSGQSPSVLKGILHEAAMQYPKQGIFSVTCPHPDIFLVARIEKVLQGSITHCAEPYMKSSDSSKVAQKVLKNAKQACQRLGQYRMPFAWAARTLFKDASGNLDKNARFSAIYRQDSNKLSNDDMLKLLADFRKPEKMAKLPVILGNLDITIDNVSSDFPNYVNSSYIPTKQFETCSKTPITFEVEEFVPCIPKHTQPYTIYTNHLYVYPKYLKYDSQKSFAKARNIAICIEFKDSDEEDSQPLKCIYGRPGGPVFTRSAFAAVLHHHQNPEFYDEIKIELPTQLHEKHHLLLTFFHVSCDNSSKGSTKKRDVVETQVGYSWLPLLKDGRVVTSEQHIPVSANLPSGYLGYQELGMGRHYGPEIKWVDGGKPLLKISTHLVSTVYTQDQHLHNFFQYCQKTESGAQALGNELVKYLKSLHAMEGHVMIAFLPTILNQLFRVLTRATQEEVAVNVTRVIIHVVAQCHEEGLESHLRSYVKYAYKAEPYVASEYKTVHEELTKSMTTILKPSADFLTSNKLLKYSWFFFDVLIKSMAQHLIENSKVKLLRNQRFPASYHHAVETVVNMLMPHITQKFRDNPEASKNANHSLAVFIKRCFTFMDRGFVFKQINNYISCFAPGDPKTLFEYKFEFLRVVCNHEHYIPLNLPMPFGKGRIQRYQDLQLDYSLTDEFCRNHFLVGLLLREVGTALQEFREVRLIAISVLKNLLIKHSFDDRYASRSHQARIATLYLPLFGLLIENVQRINVRDVSPFPVNAGMTVKDESLALPAVNPLVTPQKGSTLDNSLHKDLLGAISGIASPYTTSTPNINSVRNADSRGSLISTDSGNSLPERNSEKSNSLDKHQQSSTLGNSVVRCDKLDQSEIKSLLMCFLYILKSMSDDALFTYWNKASTSELMDFFTISEVCLHQFQYMGKRYIARTGMMHARLQQLGSLDNSLTFNHSYGHSDADVLHQSLLEANIATEVCLTALDTLSLFTLAFKNQLLADHGHNPLMKKVFDVYLCFLQKHQSETALKNVFTALRSLIYKFPSTFYEGRADMCAALCYEILKCCNSKLSSIRTEASQLLYFLMRNNFDYTGKKSFVRTHLQVIISVSQLIADVVGIGGTRFQQSLSIINNCANSDRLIKHTSFSSDVKDLTKRIRTVLMATAQMKEHENDPEMLVDLQYSLAKSYASTPELRKTWLDSMARIHVKNGDLSEAAMCYVHVTALVAEYLTRKEAVQWEPPLLPHSHSACLRRSRGGVFRQGCTAFRVITPNIDEEASMMEDVGMQDVHFNEDVLMELLEQCADGLWKAERYELIADIYKLIIPIYEKRRDFERLAHLYDTLHRAYSKVTEVMHSGRRLLGTYFRVAFFGQAAQYQFTDSETDVEGFFEDEDGKEYIYKEPKLTPLSEISQRLLKLYSDKFGSENVKMIQDSGKVNPKDLDSKYAYIQVTHVIPFFDEKELQERKTEFERSHNIRRFMFEMPFTQTGKRQGGVEEQCKRRTILTAIHCFPYVKKRIPVMYQHHTDLNPIEVAIDEMSKKVAELRQLCSSAEVDMIKLQLKLQGSVSVQVNAGPLAYARAFLDDTNTKRYPDNKVKLLKEVFRQFVEACGQALAVNERLIKEDQLEYQEEMKANYREMAKELSEIMHEQLG</sequence>
<gene>
    <name evidence="13" type="primary">DOCK9</name>
    <name type="synonym">KIAA1058</name>
    <name evidence="12" type="synonym">ZIZ1</name>
</gene>